<reference key="1">
    <citation type="journal article" date="2005" name="Nature">
        <title>The genome of the social amoeba Dictyostelium discoideum.</title>
        <authorList>
            <person name="Eichinger L."/>
            <person name="Pachebat J.A."/>
            <person name="Gloeckner G."/>
            <person name="Rajandream M.A."/>
            <person name="Sucgang R."/>
            <person name="Berriman M."/>
            <person name="Song J."/>
            <person name="Olsen R."/>
            <person name="Szafranski K."/>
            <person name="Xu Q."/>
            <person name="Tunggal B."/>
            <person name="Kummerfeld S."/>
            <person name="Madera M."/>
            <person name="Konfortov B.A."/>
            <person name="Rivero F."/>
            <person name="Bankier A.T."/>
            <person name="Lehmann R."/>
            <person name="Hamlin N."/>
            <person name="Davies R."/>
            <person name="Gaudet P."/>
            <person name="Fey P."/>
            <person name="Pilcher K."/>
            <person name="Chen G."/>
            <person name="Saunders D."/>
            <person name="Sodergren E.J."/>
            <person name="Davis P."/>
            <person name="Kerhornou A."/>
            <person name="Nie X."/>
            <person name="Hall N."/>
            <person name="Anjard C."/>
            <person name="Hemphill L."/>
            <person name="Bason N."/>
            <person name="Farbrother P."/>
            <person name="Desany B."/>
            <person name="Just E."/>
            <person name="Morio T."/>
            <person name="Rost R."/>
            <person name="Churcher C.M."/>
            <person name="Cooper J."/>
            <person name="Haydock S."/>
            <person name="van Driessche N."/>
            <person name="Cronin A."/>
            <person name="Goodhead I."/>
            <person name="Muzny D.M."/>
            <person name="Mourier T."/>
            <person name="Pain A."/>
            <person name="Lu M."/>
            <person name="Harper D."/>
            <person name="Lindsay R."/>
            <person name="Hauser H."/>
            <person name="James K.D."/>
            <person name="Quiles M."/>
            <person name="Madan Babu M."/>
            <person name="Saito T."/>
            <person name="Buchrieser C."/>
            <person name="Wardroper A."/>
            <person name="Felder M."/>
            <person name="Thangavelu M."/>
            <person name="Johnson D."/>
            <person name="Knights A."/>
            <person name="Loulseged H."/>
            <person name="Mungall K.L."/>
            <person name="Oliver K."/>
            <person name="Price C."/>
            <person name="Quail M.A."/>
            <person name="Urushihara H."/>
            <person name="Hernandez J."/>
            <person name="Rabbinowitsch E."/>
            <person name="Steffen D."/>
            <person name="Sanders M."/>
            <person name="Ma J."/>
            <person name="Kohara Y."/>
            <person name="Sharp S."/>
            <person name="Simmonds M.N."/>
            <person name="Spiegler S."/>
            <person name="Tivey A."/>
            <person name="Sugano S."/>
            <person name="White B."/>
            <person name="Walker D."/>
            <person name="Woodward J.R."/>
            <person name="Winckler T."/>
            <person name="Tanaka Y."/>
            <person name="Shaulsky G."/>
            <person name="Schleicher M."/>
            <person name="Weinstock G.M."/>
            <person name="Rosenthal A."/>
            <person name="Cox E.C."/>
            <person name="Chisholm R.L."/>
            <person name="Gibbs R.A."/>
            <person name="Loomis W.F."/>
            <person name="Platzer M."/>
            <person name="Kay R.R."/>
            <person name="Williams J.G."/>
            <person name="Dear P.H."/>
            <person name="Noegel A.A."/>
            <person name="Barrell B.G."/>
            <person name="Kuspa A."/>
        </authorList>
    </citation>
    <scope>NUCLEOTIDE SEQUENCE [LARGE SCALE GENOMIC DNA]</scope>
    <source>
        <strain>AX4</strain>
    </source>
</reference>
<organism>
    <name type="scientific">Dictyostelium discoideum</name>
    <name type="common">Social amoeba</name>
    <dbReference type="NCBI Taxonomy" id="44689"/>
    <lineage>
        <taxon>Eukaryota</taxon>
        <taxon>Amoebozoa</taxon>
        <taxon>Evosea</taxon>
        <taxon>Eumycetozoa</taxon>
        <taxon>Dictyostelia</taxon>
        <taxon>Dictyosteliales</taxon>
        <taxon>Dictyosteliaceae</taxon>
        <taxon>Dictyostelium</taxon>
    </lineage>
</organism>
<sequence>MVRFVPWNVPLYRRLETMAVAIYAMVLPVCLIMAFNLIVIPLFWGIAIPYLVWMFYFDTKHESGGRRVSLVRNSILWRYFRDYFPISLIINSNYDPKKNYIFAYHPHGIISIGAFCNFATNANNIDEKLPGLKVHLLTLESNFKIPFLRDVLMSFGMSSVSKKSCENILNSGAGESICLVVGGAEESLDARPGLNEITLKKRKGFIKLALVNGASLVPVYSFGENDIYDQVPNPRGSLVRKIQTKIKDLTGIAPPLFMGRGIFNYDFGLLPVRHKIVTVVGEPIDIPKIKSPTDQVIEHYHQIYVEALQNLFDKHKNSCADKETGNLKIN</sequence>
<proteinExistence type="inferred from homology"/>
<feature type="chain" id="PRO_0000328257" description="Diacylglycerol O-acyltransferase 2">
    <location>
        <begin position="1"/>
        <end position="330"/>
    </location>
</feature>
<feature type="transmembrane region" description="Helical" evidence="3">
    <location>
        <begin position="15"/>
        <end position="35"/>
    </location>
</feature>
<feature type="transmembrane region" description="Helical" evidence="3">
    <location>
        <begin position="37"/>
        <end position="57"/>
    </location>
</feature>
<keyword id="KW-0012">Acyltransferase</keyword>
<keyword id="KW-0256">Endoplasmic reticulum</keyword>
<keyword id="KW-0319">Glycerol metabolism</keyword>
<keyword id="KW-0444">Lipid biosynthesis</keyword>
<keyword id="KW-0443">Lipid metabolism</keyword>
<keyword id="KW-0472">Membrane</keyword>
<keyword id="KW-1185">Reference proteome</keyword>
<keyword id="KW-0808">Transferase</keyword>
<keyword id="KW-0812">Transmembrane</keyword>
<keyword id="KW-1133">Transmembrane helix</keyword>
<comment type="function">
    <text evidence="1">Catalyzes the terminal and only committed step in triacylglycerol synthesis by using diacylglycerol and fatty acyl CoA as substrates. Required for storage lipid synthesis (By similarity).</text>
</comment>
<comment type="catalytic activity">
    <reaction evidence="1">
        <text>an acyl-CoA + a 1,2-diacyl-sn-glycerol = a triacyl-sn-glycerol + CoA</text>
        <dbReference type="Rhea" id="RHEA:10868"/>
        <dbReference type="ChEBI" id="CHEBI:17815"/>
        <dbReference type="ChEBI" id="CHEBI:57287"/>
        <dbReference type="ChEBI" id="CHEBI:58342"/>
        <dbReference type="ChEBI" id="CHEBI:64615"/>
        <dbReference type="EC" id="2.3.1.20"/>
    </reaction>
    <physiologicalReaction direction="left-to-right" evidence="1">
        <dbReference type="Rhea" id="RHEA:10869"/>
    </physiologicalReaction>
</comment>
<comment type="catalytic activity">
    <reaction evidence="1">
        <text>all-trans-retinol + an acyl-CoA = an all-trans-retinyl ester + CoA</text>
        <dbReference type="Rhea" id="RHEA:11488"/>
        <dbReference type="ChEBI" id="CHEBI:17336"/>
        <dbReference type="ChEBI" id="CHEBI:57287"/>
        <dbReference type="ChEBI" id="CHEBI:58342"/>
        <dbReference type="ChEBI" id="CHEBI:63410"/>
        <dbReference type="EC" id="2.3.1.76"/>
    </reaction>
    <physiologicalReaction direction="left-to-right" evidence="1">
        <dbReference type="Rhea" id="RHEA:11489"/>
    </physiologicalReaction>
</comment>
<comment type="catalytic activity">
    <reaction evidence="1">
        <text>2-(9Z-octadecenoyl)-glycerol + (9Z)-octadecenoyl-CoA = 1,2-di-(9Z-octadecenoyl)-sn-glycerol + CoA</text>
        <dbReference type="Rhea" id="RHEA:37911"/>
        <dbReference type="ChEBI" id="CHEBI:52333"/>
        <dbReference type="ChEBI" id="CHEBI:57287"/>
        <dbReference type="ChEBI" id="CHEBI:57387"/>
        <dbReference type="ChEBI" id="CHEBI:73990"/>
    </reaction>
    <physiologicalReaction direction="left-to-right" evidence="1">
        <dbReference type="Rhea" id="RHEA:37912"/>
    </physiologicalReaction>
</comment>
<comment type="catalytic activity">
    <reaction evidence="1">
        <text>1,2-di-(9Z-octadecenoyl)-sn-glycerol + (9Z)-octadecenoyl-CoA = 1,2,3-tri-(9Z-octadecenoyl)-glycerol + CoA</text>
        <dbReference type="Rhea" id="RHEA:38219"/>
        <dbReference type="ChEBI" id="CHEBI:52333"/>
        <dbReference type="ChEBI" id="CHEBI:53753"/>
        <dbReference type="ChEBI" id="CHEBI:57287"/>
        <dbReference type="ChEBI" id="CHEBI:57387"/>
    </reaction>
    <physiologicalReaction direction="left-to-right" evidence="1">
        <dbReference type="Rhea" id="RHEA:38220"/>
    </physiologicalReaction>
</comment>
<comment type="catalytic activity">
    <reaction evidence="1">
        <text>all-trans-retinol + hexadecanoyl-CoA = all-trans-retinyl hexadecanoate + CoA</text>
        <dbReference type="Rhea" id="RHEA:38175"/>
        <dbReference type="ChEBI" id="CHEBI:17336"/>
        <dbReference type="ChEBI" id="CHEBI:17616"/>
        <dbReference type="ChEBI" id="CHEBI:57287"/>
        <dbReference type="ChEBI" id="CHEBI:57379"/>
    </reaction>
    <physiologicalReaction direction="left-to-right" evidence="1">
        <dbReference type="Rhea" id="RHEA:38176"/>
    </physiologicalReaction>
</comment>
<comment type="catalytic activity">
    <reaction evidence="1">
        <text>1-O-(9Z-octadecenyl)-glycerol + (9Z)-octadecenoyl-CoA = 1-O-(9Z-octadecyl)-3-(9Z-octadecenoyl)-glycerol + CoA</text>
        <dbReference type="Rhea" id="RHEA:55340"/>
        <dbReference type="ChEBI" id="CHEBI:34116"/>
        <dbReference type="ChEBI" id="CHEBI:57287"/>
        <dbReference type="ChEBI" id="CHEBI:57387"/>
        <dbReference type="ChEBI" id="CHEBI:197429"/>
    </reaction>
    <physiologicalReaction direction="left-to-right" evidence="1">
        <dbReference type="Rhea" id="RHEA:55341"/>
    </physiologicalReaction>
</comment>
<comment type="catalytic activity">
    <reaction evidence="1">
        <text>1-(9Z-octadecenoyl)-glycerol + (9Z)-octadecenoyl-CoA = 1,2-di-(9Z-octadecenoyl)-glycerol + CoA</text>
        <dbReference type="Rhea" id="RHEA:37915"/>
        <dbReference type="ChEBI" id="CHEBI:52323"/>
        <dbReference type="ChEBI" id="CHEBI:57287"/>
        <dbReference type="ChEBI" id="CHEBI:57387"/>
        <dbReference type="ChEBI" id="CHEBI:75342"/>
    </reaction>
    <physiologicalReaction direction="left-to-right" evidence="1">
        <dbReference type="Rhea" id="RHEA:37916"/>
    </physiologicalReaction>
</comment>
<comment type="catalytic activity">
    <reaction evidence="2">
        <text>1,2-di-(9Z-octadecenoyl)-sn-glycerol + hexadecanoyl-CoA = 1,2-di-(9Z)-octadecenoyl-3-hexadecanoyl-sn-glycerol + CoA</text>
        <dbReference type="Rhea" id="RHEA:38163"/>
        <dbReference type="ChEBI" id="CHEBI:52333"/>
        <dbReference type="ChEBI" id="CHEBI:57287"/>
        <dbReference type="ChEBI" id="CHEBI:57379"/>
        <dbReference type="ChEBI" id="CHEBI:75583"/>
    </reaction>
    <physiologicalReaction direction="left-to-right" evidence="2">
        <dbReference type="Rhea" id="RHEA:38164"/>
    </physiologicalReaction>
</comment>
<comment type="catalytic activity">
    <reaction evidence="2">
        <text>1,3-di-(9Z-octadecenoyl)-glycerol + (9Z)-octadecenoyl-CoA = 1,2,3-tri-(9Z-octadecenoyl)-glycerol + CoA</text>
        <dbReference type="Rhea" id="RHEA:38435"/>
        <dbReference type="ChEBI" id="CHEBI:53753"/>
        <dbReference type="ChEBI" id="CHEBI:57287"/>
        <dbReference type="ChEBI" id="CHEBI:57387"/>
        <dbReference type="ChEBI" id="CHEBI:75735"/>
    </reaction>
    <physiologicalReaction direction="left-to-right" evidence="2">
        <dbReference type="Rhea" id="RHEA:38436"/>
    </physiologicalReaction>
</comment>
<comment type="catalytic activity">
    <reaction evidence="2">
        <text>2,3-di-(9Z)-octadecenoyl-sn-glycerol + (9Z)-octadecenoyl-CoA = 1,2,3-tri-(9Z-octadecenoyl)-glycerol + CoA</text>
        <dbReference type="Rhea" id="RHEA:38439"/>
        <dbReference type="ChEBI" id="CHEBI:53753"/>
        <dbReference type="ChEBI" id="CHEBI:57287"/>
        <dbReference type="ChEBI" id="CHEBI:57387"/>
        <dbReference type="ChEBI" id="CHEBI:75824"/>
    </reaction>
    <physiologicalReaction direction="left-to-right" evidence="2">
        <dbReference type="Rhea" id="RHEA:38440"/>
    </physiologicalReaction>
</comment>
<comment type="catalytic activity">
    <reaction evidence="2">
        <text>2-(9Z-octadecenoyl)-glycerol + hexadecanoyl-CoA = 1-hexadecanoyl-2-(9Z-octadecenoyl)-sn-glycerol + CoA</text>
        <dbReference type="Rhea" id="RHEA:38071"/>
        <dbReference type="ChEBI" id="CHEBI:57287"/>
        <dbReference type="ChEBI" id="CHEBI:57379"/>
        <dbReference type="ChEBI" id="CHEBI:73990"/>
        <dbReference type="ChEBI" id="CHEBI:75466"/>
    </reaction>
    <physiologicalReaction direction="left-to-right" evidence="2">
        <dbReference type="Rhea" id="RHEA:38072"/>
    </physiologicalReaction>
</comment>
<comment type="pathway">
    <text>Glycerolipid metabolism; triacylglycerol biosynthesis.</text>
</comment>
<comment type="subcellular location">
    <subcellularLocation>
        <location evidence="1">Endoplasmic reticulum membrane</location>
        <topology evidence="1">Multi-pass membrane protein</topology>
    </subcellularLocation>
</comment>
<comment type="similarity">
    <text evidence="4">Belongs to the diacylglycerol acyltransferase family.</text>
</comment>
<evidence type="ECO:0000250" key="1">
    <source>
        <dbReference type="UniProtKB" id="Q96PD7"/>
    </source>
</evidence>
<evidence type="ECO:0000250" key="2">
    <source>
        <dbReference type="UniProtKB" id="Q9DCV3"/>
    </source>
</evidence>
<evidence type="ECO:0000255" key="3"/>
<evidence type="ECO:0000305" key="4"/>
<gene>
    <name type="primary">dgat2</name>
    <name type="ORF">DDB_G0290279</name>
</gene>
<dbReference type="EC" id="2.3.1.20" evidence="1"/>
<dbReference type="EC" id="2.3.1.76" evidence="1"/>
<dbReference type="EMBL" id="AAFI02000162">
    <property type="protein sequence ID" value="EAL62266.1"/>
    <property type="molecule type" value="Genomic_DNA"/>
</dbReference>
<dbReference type="RefSeq" id="XP_635762.1">
    <property type="nucleotide sequence ID" value="XM_630670.1"/>
</dbReference>
<dbReference type="FunCoup" id="Q54GC1">
    <property type="interactions" value="110"/>
</dbReference>
<dbReference type="STRING" id="44689.Q54GC1"/>
<dbReference type="PaxDb" id="44689-DDB0233097"/>
<dbReference type="EnsemblProtists" id="EAL62266">
    <property type="protein sequence ID" value="EAL62266"/>
    <property type="gene ID" value="DDB_G0290279"/>
</dbReference>
<dbReference type="GeneID" id="8627566"/>
<dbReference type="KEGG" id="ddi:DDB_G0290279"/>
<dbReference type="dictyBase" id="DDB_G0290279">
    <property type="gene designation" value="dgat2"/>
</dbReference>
<dbReference type="VEuPathDB" id="AmoebaDB:DDB_G0290279"/>
<dbReference type="eggNOG" id="KOG0831">
    <property type="taxonomic scope" value="Eukaryota"/>
</dbReference>
<dbReference type="HOGENOM" id="CLU_023995_0_1_1"/>
<dbReference type="InParanoid" id="Q54GC1"/>
<dbReference type="OMA" id="FWFTCAN"/>
<dbReference type="PhylomeDB" id="Q54GC1"/>
<dbReference type="Reactome" id="R-DDI-1482883">
    <property type="pathway name" value="Acyl chain remodeling of DAG and TAG"/>
</dbReference>
<dbReference type="Reactome" id="R-DDI-2142753">
    <property type="pathway name" value="Arachidonate metabolism"/>
</dbReference>
<dbReference type="Reactome" id="R-DDI-2187335">
    <property type="pathway name" value="The retinoid cycle in cones (daylight vision)"/>
</dbReference>
<dbReference type="Reactome" id="R-DDI-75109">
    <property type="pathway name" value="Triglyceride biosynthesis"/>
</dbReference>
<dbReference type="Reactome" id="R-DDI-9640463">
    <property type="pathway name" value="Wax biosynthesis"/>
</dbReference>
<dbReference type="UniPathway" id="UPA00282"/>
<dbReference type="PRO" id="PR:Q54GC1"/>
<dbReference type="Proteomes" id="UP000002195">
    <property type="component" value="Chromosome 5"/>
</dbReference>
<dbReference type="GO" id="GO:0005789">
    <property type="term" value="C:endoplasmic reticulum membrane"/>
    <property type="evidence" value="ECO:0000250"/>
    <property type="project" value="UniProtKB"/>
</dbReference>
<dbReference type="GO" id="GO:0005811">
    <property type="term" value="C:lipid droplet"/>
    <property type="evidence" value="ECO:0000314"/>
    <property type="project" value="dictyBase"/>
</dbReference>
<dbReference type="GO" id="GO:1990578">
    <property type="term" value="C:perinuclear endoplasmic reticulum membrane"/>
    <property type="evidence" value="ECO:0000250"/>
    <property type="project" value="UniProtKB"/>
</dbReference>
<dbReference type="GO" id="GO:0004144">
    <property type="term" value="F:diacylglycerol O-acyltransferase activity"/>
    <property type="evidence" value="ECO:0000315"/>
    <property type="project" value="dictyBase"/>
</dbReference>
<dbReference type="GO" id="GO:0050252">
    <property type="term" value="F:retinol O-fatty-acyltransferase activity"/>
    <property type="evidence" value="ECO:0007669"/>
    <property type="project" value="UniProtKB-EC"/>
</dbReference>
<dbReference type="GO" id="GO:0006651">
    <property type="term" value="P:diacylglycerol biosynthetic process"/>
    <property type="evidence" value="ECO:0000250"/>
    <property type="project" value="UniProtKB"/>
</dbReference>
<dbReference type="GO" id="GO:0006071">
    <property type="term" value="P:glycerol metabolic process"/>
    <property type="evidence" value="ECO:0007669"/>
    <property type="project" value="UniProtKB-KW"/>
</dbReference>
<dbReference type="GO" id="GO:0006640">
    <property type="term" value="P:monoacylglycerol biosynthetic process"/>
    <property type="evidence" value="ECO:0000250"/>
    <property type="project" value="UniProtKB"/>
</dbReference>
<dbReference type="GO" id="GO:0019432">
    <property type="term" value="P:triglyceride biosynthetic process"/>
    <property type="evidence" value="ECO:0000315"/>
    <property type="project" value="dictyBase"/>
</dbReference>
<dbReference type="CDD" id="cd07987">
    <property type="entry name" value="LPLAT_MGAT-like"/>
    <property type="match status" value="1"/>
</dbReference>
<dbReference type="InterPro" id="IPR007130">
    <property type="entry name" value="DAGAT"/>
</dbReference>
<dbReference type="PANTHER" id="PTHR12317:SF0">
    <property type="entry name" value="ACYLTRANSFERASE"/>
    <property type="match status" value="1"/>
</dbReference>
<dbReference type="PANTHER" id="PTHR12317">
    <property type="entry name" value="DIACYLGLYCEROL O-ACYLTRANSFERASE"/>
    <property type="match status" value="1"/>
</dbReference>
<dbReference type="Pfam" id="PF03982">
    <property type="entry name" value="DAGAT"/>
    <property type="match status" value="1"/>
</dbReference>
<dbReference type="SUPFAM" id="SSF69593">
    <property type="entry name" value="Glycerol-3-phosphate (1)-acyltransferase"/>
    <property type="match status" value="1"/>
</dbReference>
<accession>Q54GC1</accession>
<protein>
    <recommendedName>
        <fullName evidence="4">Diacylglycerol O-acyltransferase 2</fullName>
        <ecNumber evidence="1">2.3.1.20</ecNumber>
    </recommendedName>
    <alternativeName>
        <fullName evidence="1">Acyl-CoA retinol O-fatty-acyltransferase</fullName>
        <shortName evidence="1">ARAT</shortName>
        <shortName evidence="1">Retinol O-fatty-acyltransferase</shortName>
        <ecNumber evidence="1">2.3.1.76</ecNumber>
    </alternativeName>
    <alternativeName>
        <fullName>Diglyceride acyltransferase 2</fullName>
    </alternativeName>
</protein>
<name>DGAT2_DICDI</name>